<name>RL3_LISW6</name>
<comment type="function">
    <text evidence="1">One of the primary rRNA binding proteins, it binds directly near the 3'-end of the 23S rRNA, where it nucleates assembly of the 50S subunit.</text>
</comment>
<comment type="subunit">
    <text evidence="1">Part of the 50S ribosomal subunit. Forms a cluster with proteins L14 and L19.</text>
</comment>
<comment type="similarity">
    <text evidence="1">Belongs to the universal ribosomal protein uL3 family.</text>
</comment>
<gene>
    <name evidence="1" type="primary">rplC</name>
    <name type="ordered locus">lwe2582</name>
</gene>
<organism>
    <name type="scientific">Listeria welshimeri serovar 6b (strain ATCC 35897 / DSM 20650 / CCUG 15529 / CIP 8149 / NCTC 11857 / SLCC 5334 / V8)</name>
    <dbReference type="NCBI Taxonomy" id="386043"/>
    <lineage>
        <taxon>Bacteria</taxon>
        <taxon>Bacillati</taxon>
        <taxon>Bacillota</taxon>
        <taxon>Bacilli</taxon>
        <taxon>Bacillales</taxon>
        <taxon>Listeriaceae</taxon>
        <taxon>Listeria</taxon>
    </lineage>
</organism>
<proteinExistence type="inferred from homology"/>
<protein>
    <recommendedName>
        <fullName evidence="1">Large ribosomal subunit protein uL3</fullName>
    </recommendedName>
    <alternativeName>
        <fullName evidence="3">50S ribosomal protein L3</fullName>
    </alternativeName>
</protein>
<sequence length="209" mass="22841">MTKGILGRKVGMTQVFTENGELIPVTVIEAAQNVVLQKKTVETDGYEAVQIGFEDKRAKLSNKPEQGHVAKADTTPKRFIREFRDVNLDEYEIGAEVKVDVFAEGDIIDATGVSKGKGFQGVIKRHGQSRGPMAHGSRYHRRPGSMGPVAPNRVFKNKLLPGRMGGEQITIQNLEIVKVDVEKNVLLVKGNVPGAKKALVQIKTATKAK</sequence>
<accession>A0ALW8</accession>
<evidence type="ECO:0000255" key="1">
    <source>
        <dbReference type="HAMAP-Rule" id="MF_01325"/>
    </source>
</evidence>
<evidence type="ECO:0000256" key="2">
    <source>
        <dbReference type="SAM" id="MobiDB-lite"/>
    </source>
</evidence>
<evidence type="ECO:0000305" key="3"/>
<keyword id="KW-0687">Ribonucleoprotein</keyword>
<keyword id="KW-0689">Ribosomal protein</keyword>
<keyword id="KW-0694">RNA-binding</keyword>
<keyword id="KW-0699">rRNA-binding</keyword>
<feature type="chain" id="PRO_1000052073" description="Large ribosomal subunit protein uL3">
    <location>
        <begin position="1"/>
        <end position="209"/>
    </location>
</feature>
<feature type="region of interest" description="Disordered" evidence="2">
    <location>
        <begin position="126"/>
        <end position="148"/>
    </location>
</feature>
<reference key="1">
    <citation type="journal article" date="2006" name="J. Bacteriol.">
        <title>Whole-genome sequence of Listeria welshimeri reveals common steps in genome reduction with Listeria innocua as compared to Listeria monocytogenes.</title>
        <authorList>
            <person name="Hain T."/>
            <person name="Steinweg C."/>
            <person name="Kuenne C.T."/>
            <person name="Billion A."/>
            <person name="Ghai R."/>
            <person name="Chatterjee S.S."/>
            <person name="Domann E."/>
            <person name="Kaerst U."/>
            <person name="Goesmann A."/>
            <person name="Bekel T."/>
            <person name="Bartels D."/>
            <person name="Kaiser O."/>
            <person name="Meyer F."/>
            <person name="Puehler A."/>
            <person name="Weisshaar B."/>
            <person name="Wehland J."/>
            <person name="Liang C."/>
            <person name="Dandekar T."/>
            <person name="Lampidis R."/>
            <person name="Kreft J."/>
            <person name="Goebel W."/>
            <person name="Chakraborty T."/>
        </authorList>
    </citation>
    <scope>NUCLEOTIDE SEQUENCE [LARGE SCALE GENOMIC DNA]</scope>
    <source>
        <strain>ATCC 35897 / DSM 20650 / CCUG 15529 / CIP 8149 / NCTC 11857 / SLCC 5334 / V8</strain>
    </source>
</reference>
<dbReference type="EMBL" id="AM263198">
    <property type="protein sequence ID" value="CAK22000.1"/>
    <property type="molecule type" value="Genomic_DNA"/>
</dbReference>
<dbReference type="RefSeq" id="WP_003772936.1">
    <property type="nucleotide sequence ID" value="NC_008555.1"/>
</dbReference>
<dbReference type="SMR" id="A0ALW8"/>
<dbReference type="STRING" id="386043.lwe2582"/>
<dbReference type="GeneID" id="61190506"/>
<dbReference type="GeneID" id="93236054"/>
<dbReference type="KEGG" id="lwe:lwe2582"/>
<dbReference type="eggNOG" id="COG0087">
    <property type="taxonomic scope" value="Bacteria"/>
</dbReference>
<dbReference type="HOGENOM" id="CLU_044142_4_1_9"/>
<dbReference type="OrthoDB" id="9806135at2"/>
<dbReference type="Proteomes" id="UP000000779">
    <property type="component" value="Chromosome"/>
</dbReference>
<dbReference type="GO" id="GO:0022625">
    <property type="term" value="C:cytosolic large ribosomal subunit"/>
    <property type="evidence" value="ECO:0007669"/>
    <property type="project" value="TreeGrafter"/>
</dbReference>
<dbReference type="GO" id="GO:0019843">
    <property type="term" value="F:rRNA binding"/>
    <property type="evidence" value="ECO:0007669"/>
    <property type="project" value="UniProtKB-UniRule"/>
</dbReference>
<dbReference type="GO" id="GO:0003735">
    <property type="term" value="F:structural constituent of ribosome"/>
    <property type="evidence" value="ECO:0007669"/>
    <property type="project" value="InterPro"/>
</dbReference>
<dbReference type="GO" id="GO:0006412">
    <property type="term" value="P:translation"/>
    <property type="evidence" value="ECO:0007669"/>
    <property type="project" value="UniProtKB-UniRule"/>
</dbReference>
<dbReference type="FunFam" id="2.40.30.10:FF:000004">
    <property type="entry name" value="50S ribosomal protein L3"/>
    <property type="match status" value="1"/>
</dbReference>
<dbReference type="FunFam" id="3.30.160.810:FF:000002">
    <property type="entry name" value="50S ribosomal protein L3"/>
    <property type="match status" value="1"/>
</dbReference>
<dbReference type="Gene3D" id="3.30.160.810">
    <property type="match status" value="1"/>
</dbReference>
<dbReference type="Gene3D" id="2.40.30.10">
    <property type="entry name" value="Translation factors"/>
    <property type="match status" value="1"/>
</dbReference>
<dbReference type="HAMAP" id="MF_01325_B">
    <property type="entry name" value="Ribosomal_uL3_B"/>
    <property type="match status" value="1"/>
</dbReference>
<dbReference type="InterPro" id="IPR000597">
    <property type="entry name" value="Ribosomal_uL3"/>
</dbReference>
<dbReference type="InterPro" id="IPR019927">
    <property type="entry name" value="Ribosomal_uL3_bac/org-type"/>
</dbReference>
<dbReference type="InterPro" id="IPR019926">
    <property type="entry name" value="Ribosomal_uL3_CS"/>
</dbReference>
<dbReference type="InterPro" id="IPR009000">
    <property type="entry name" value="Transl_B-barrel_sf"/>
</dbReference>
<dbReference type="NCBIfam" id="TIGR03625">
    <property type="entry name" value="L3_bact"/>
    <property type="match status" value="1"/>
</dbReference>
<dbReference type="PANTHER" id="PTHR11229">
    <property type="entry name" value="50S RIBOSOMAL PROTEIN L3"/>
    <property type="match status" value="1"/>
</dbReference>
<dbReference type="PANTHER" id="PTHR11229:SF16">
    <property type="entry name" value="LARGE RIBOSOMAL SUBUNIT PROTEIN UL3C"/>
    <property type="match status" value="1"/>
</dbReference>
<dbReference type="Pfam" id="PF00297">
    <property type="entry name" value="Ribosomal_L3"/>
    <property type="match status" value="1"/>
</dbReference>
<dbReference type="SUPFAM" id="SSF50447">
    <property type="entry name" value="Translation proteins"/>
    <property type="match status" value="1"/>
</dbReference>
<dbReference type="PROSITE" id="PS00474">
    <property type="entry name" value="RIBOSOMAL_L3"/>
    <property type="match status" value="1"/>
</dbReference>